<name>CP2DK_MESAU</name>
<dbReference type="EC" id="1.14.14.-"/>
<dbReference type="EMBL" id="AB031864">
    <property type="protein sequence ID" value="BAA89313.1"/>
    <property type="molecule type" value="mRNA"/>
</dbReference>
<dbReference type="SMR" id="Q9QYG5"/>
<dbReference type="Proteomes" id="UP000189706">
    <property type="component" value="Unplaced"/>
</dbReference>
<dbReference type="GO" id="GO:0005789">
    <property type="term" value="C:endoplasmic reticulum membrane"/>
    <property type="evidence" value="ECO:0007669"/>
    <property type="project" value="UniProtKB-SubCell"/>
</dbReference>
<dbReference type="GO" id="GO:0020037">
    <property type="term" value="F:heme binding"/>
    <property type="evidence" value="ECO:0007669"/>
    <property type="project" value="InterPro"/>
</dbReference>
<dbReference type="GO" id="GO:0005506">
    <property type="term" value="F:iron ion binding"/>
    <property type="evidence" value="ECO:0007669"/>
    <property type="project" value="InterPro"/>
</dbReference>
<dbReference type="GO" id="GO:0016712">
    <property type="term" value="F:oxidoreductase activity, acting on paired donors, with incorporation or reduction of molecular oxygen, reduced flavin or flavoprotein as one donor, and incorporation of one atom of oxygen"/>
    <property type="evidence" value="ECO:0007669"/>
    <property type="project" value="InterPro"/>
</dbReference>
<dbReference type="GO" id="GO:0019369">
    <property type="term" value="P:arachidonate metabolic process"/>
    <property type="evidence" value="ECO:0007669"/>
    <property type="project" value="TreeGrafter"/>
</dbReference>
<dbReference type="GO" id="GO:0006805">
    <property type="term" value="P:xenobiotic metabolic process"/>
    <property type="evidence" value="ECO:0007669"/>
    <property type="project" value="TreeGrafter"/>
</dbReference>
<dbReference type="CDD" id="cd20663">
    <property type="entry name" value="CYP2D"/>
    <property type="match status" value="1"/>
</dbReference>
<dbReference type="FunFam" id="1.10.630.10:FF:000004">
    <property type="entry name" value="cytochrome P450 2D15 isoform X1"/>
    <property type="match status" value="1"/>
</dbReference>
<dbReference type="Gene3D" id="1.10.630.10">
    <property type="entry name" value="Cytochrome P450"/>
    <property type="match status" value="1"/>
</dbReference>
<dbReference type="InterPro" id="IPR001128">
    <property type="entry name" value="Cyt_P450"/>
</dbReference>
<dbReference type="InterPro" id="IPR017972">
    <property type="entry name" value="Cyt_P450_CS"/>
</dbReference>
<dbReference type="InterPro" id="IPR002401">
    <property type="entry name" value="Cyt_P450_E_grp-I"/>
</dbReference>
<dbReference type="InterPro" id="IPR008069">
    <property type="entry name" value="Cyt_P450_E_grp-I_CYP2D-like"/>
</dbReference>
<dbReference type="InterPro" id="IPR036396">
    <property type="entry name" value="Cyt_P450_sf"/>
</dbReference>
<dbReference type="InterPro" id="IPR050182">
    <property type="entry name" value="Cytochrome_P450_fam2"/>
</dbReference>
<dbReference type="PANTHER" id="PTHR24300:SF109">
    <property type="entry name" value="CYTOCHROME P450 2D26"/>
    <property type="match status" value="1"/>
</dbReference>
<dbReference type="PANTHER" id="PTHR24300">
    <property type="entry name" value="CYTOCHROME P450 508A4-RELATED"/>
    <property type="match status" value="1"/>
</dbReference>
<dbReference type="Pfam" id="PF00067">
    <property type="entry name" value="p450"/>
    <property type="match status" value="1"/>
</dbReference>
<dbReference type="PRINTS" id="PR00463">
    <property type="entry name" value="EP450I"/>
</dbReference>
<dbReference type="PRINTS" id="PR01686">
    <property type="entry name" value="EP450ICYP2D"/>
</dbReference>
<dbReference type="PRINTS" id="PR00385">
    <property type="entry name" value="P450"/>
</dbReference>
<dbReference type="SUPFAM" id="SSF48264">
    <property type="entry name" value="Cytochrome P450"/>
    <property type="match status" value="1"/>
</dbReference>
<dbReference type="PROSITE" id="PS00086">
    <property type="entry name" value="CYTOCHROME_P450"/>
    <property type="match status" value="1"/>
</dbReference>
<keyword id="KW-0256">Endoplasmic reticulum</keyword>
<keyword id="KW-0349">Heme</keyword>
<keyword id="KW-0408">Iron</keyword>
<keyword id="KW-0472">Membrane</keyword>
<keyword id="KW-0479">Metal-binding</keyword>
<keyword id="KW-0492">Microsome</keyword>
<keyword id="KW-0503">Monooxygenase</keyword>
<keyword id="KW-0560">Oxidoreductase</keyword>
<keyword id="KW-1185">Reference proteome</keyword>
<evidence type="ECO:0000250" key="1"/>
<evidence type="ECO:0000305" key="2"/>
<gene>
    <name type="primary">CYP2D20</name>
</gene>
<organism>
    <name type="scientific">Mesocricetus auratus</name>
    <name type="common">Golden hamster</name>
    <dbReference type="NCBI Taxonomy" id="10036"/>
    <lineage>
        <taxon>Eukaryota</taxon>
        <taxon>Metazoa</taxon>
        <taxon>Chordata</taxon>
        <taxon>Craniata</taxon>
        <taxon>Vertebrata</taxon>
        <taxon>Euteleostomi</taxon>
        <taxon>Mammalia</taxon>
        <taxon>Eutheria</taxon>
        <taxon>Euarchontoglires</taxon>
        <taxon>Glires</taxon>
        <taxon>Rodentia</taxon>
        <taxon>Myomorpha</taxon>
        <taxon>Muroidea</taxon>
        <taxon>Cricetidae</taxon>
        <taxon>Cricetinae</taxon>
        <taxon>Mesocricetus</taxon>
    </lineage>
</organism>
<reference key="1">
    <citation type="journal article" date="2000" name="Comp. Biochem. Physiol.">
        <title>Molecular cloning and characterization of three novel cytochrome P450 2D isoforms, CYP2D20, CYP2D27, and CYP2D28 in the Syrian hamster (Mesocricetus auratus).</title>
        <authorList>
            <person name="Oka T."/>
            <person name="Fukuhara M."/>
            <person name="Ushio F."/>
            <person name="Kurose K."/>
        </authorList>
    </citation>
    <scope>NUCLEOTIDE SEQUENCE [MRNA]</scope>
    <source>
        <tissue>Liver</tissue>
    </source>
</reference>
<sequence length="500" mass="56503">MVLLIGDGLWSGVIFTALFLLLVDLMHRRKFWRARYPPGPMPLPGLGNLLQVDFENMPYSLYKFQQRYGDVFSLQMAWKPVVVINGLKAVREVLVNCGEDTADRPPVPIFNHLGYRPKSQGVVFARYGPQWREQRRFSVSTMRDFGVGKKSLEQWVTEEAGHLCDAFTQEAGHPFNPITLLNKSVCNVISSLIYAHRFDYEDPFFNKLLKTLQESFGEDSGFIAEVLNAVPVLLRIPGLPGKAFPKLTAFMDSLYKMLIEHKTTWDPAQPPRGLTDAFLAEVEKAKGRPESSFNDENLHVVVADLFIAGMVTTSTTLSWALLLMILHPDVQSRVQQEIDDVIGQVRRPEMADQARMPYTNAVIHEVQRFGDIAPVNVPHMTSRDVEVQGFLIPKGTTLIPNLSSVLKDETVWEKPLHFHPEHFLDAQGRFVKQEAFMPFSAGRRACLGEPLARMELFLFFTCLLQRFSFSVPAGQPRPSDQGVFALPVTPTPYELCAVVR</sequence>
<protein>
    <recommendedName>
        <fullName>Cytochrome P450 2D20</fullName>
        <ecNumber>1.14.14.-</ecNumber>
    </recommendedName>
    <alternativeName>
        <fullName>CYPIID20</fullName>
    </alternativeName>
</protein>
<feature type="chain" id="PRO_0000051744" description="Cytochrome P450 2D20">
    <location>
        <begin position="1"/>
        <end position="500"/>
    </location>
</feature>
<feature type="binding site" description="axial binding residue" evidence="1">
    <location>
        <position position="446"/>
    </location>
    <ligand>
        <name>heme</name>
        <dbReference type="ChEBI" id="CHEBI:30413"/>
    </ligand>
    <ligandPart>
        <name>Fe</name>
        <dbReference type="ChEBI" id="CHEBI:18248"/>
    </ligandPart>
</feature>
<accession>Q9QYG5</accession>
<proteinExistence type="evidence at transcript level"/>
<comment type="cofactor">
    <cofactor evidence="1">
        <name>heme</name>
        <dbReference type="ChEBI" id="CHEBI:30413"/>
    </cofactor>
</comment>
<comment type="subcellular location">
    <subcellularLocation>
        <location evidence="1">Endoplasmic reticulum membrane</location>
        <topology evidence="1">Peripheral membrane protein</topology>
    </subcellularLocation>
    <subcellularLocation>
        <location evidence="1">Microsome membrane</location>
        <topology evidence="1">Peripheral membrane protein</topology>
    </subcellularLocation>
</comment>
<comment type="similarity">
    <text evidence="2">Belongs to the cytochrome P450 family.</text>
</comment>